<protein>
    <recommendedName>
        <fullName>L-selectin</fullName>
    </recommendedName>
    <alternativeName>
        <fullName>CD62 antigen-like family member L</fullName>
    </alternativeName>
    <alternativeName>
        <fullName>Leukocyte adhesion molecule 1</fullName>
        <shortName>LAM-1</shortName>
    </alternativeName>
    <alternativeName>
        <fullName>Leukocyte-endothelial cell adhesion molecule 1</fullName>
        <shortName>LECAM1</shortName>
    </alternativeName>
    <alternativeName>
        <fullName>Lymph node homing receptor</fullName>
    </alternativeName>
    <cdAntigenName>CD62L</cdAntigenName>
</protein>
<accession>Q95237</accession>
<sequence>MIFPWKCQSTQRDLWNIFKLWGWTMLCCDFLAHHGTDCWTYHYSEKPMNWQRARRFCRDNYTDLVAIQNKAEIEYLEKTLPFSRSYYWIGIRKIGGIWTWVGTNKSLTEEAENWGDGEPNNKKNKEDCVEIYIKRNKDAGKWNDDACHKLKAALCYTASCQPWSCSGHGECVEIINNYTCNCDVGYYGPQCQFVIQCEPLEAPELGTMDCTHPLGNFSFSSQCAFSCSEGTNLTGIEETTCGPFGNWSSPEPTCQVIQCEPLSAPDLGIMNCSHPLASFSFTSACTFICSEGTELIGKKKTICESSGIWSNPSPICQKLDKSFSMIKEGDYNPLFIPVAVMVTAFSGLAFIIWLARRLKKGKKSKRSMDDPY</sequence>
<evidence type="ECO:0000250" key="1"/>
<evidence type="ECO:0000250" key="2">
    <source>
        <dbReference type="UniProtKB" id="P14151"/>
    </source>
</evidence>
<evidence type="ECO:0000255" key="3"/>
<evidence type="ECO:0000255" key="4">
    <source>
        <dbReference type="PROSITE-ProRule" id="PRU00040"/>
    </source>
</evidence>
<evidence type="ECO:0000255" key="5">
    <source>
        <dbReference type="PROSITE-ProRule" id="PRU00076"/>
    </source>
</evidence>
<evidence type="ECO:0000255" key="6">
    <source>
        <dbReference type="PROSITE-ProRule" id="PRU00302"/>
    </source>
</evidence>
<evidence type="ECO:0000305" key="7"/>
<proteinExistence type="evidence at transcript level"/>
<feature type="signal peptide" evidence="1">
    <location>
        <begin position="1"/>
        <end position="28"/>
    </location>
</feature>
<feature type="propeptide" id="PRO_0000017481" evidence="1">
    <location>
        <begin position="29"/>
        <end position="38"/>
    </location>
</feature>
<feature type="chain" id="PRO_0000017482" description="L-selectin">
    <location>
        <begin position="39"/>
        <end position="372"/>
    </location>
</feature>
<feature type="topological domain" description="Extracellular" evidence="3">
    <location>
        <begin position="39"/>
        <end position="332"/>
    </location>
</feature>
<feature type="transmembrane region" description="Helical" evidence="3">
    <location>
        <begin position="333"/>
        <end position="355"/>
    </location>
</feature>
<feature type="topological domain" description="Cytoplasmic" evidence="3">
    <location>
        <begin position="356"/>
        <end position="372"/>
    </location>
</feature>
<feature type="domain" description="C-type lectin" evidence="4">
    <location>
        <begin position="55"/>
        <end position="155"/>
    </location>
</feature>
<feature type="domain" description="EGF-like" evidence="5">
    <location>
        <begin position="156"/>
        <end position="192"/>
    </location>
</feature>
<feature type="domain" description="Sushi 1" evidence="6">
    <location>
        <begin position="195"/>
        <end position="256"/>
    </location>
</feature>
<feature type="domain" description="Sushi 2" evidence="6">
    <location>
        <begin position="257"/>
        <end position="318"/>
    </location>
</feature>
<feature type="binding site" evidence="2">
    <location>
        <position position="118"/>
    </location>
    <ligand>
        <name>Ca(2+)</name>
        <dbReference type="ChEBI" id="CHEBI:29108"/>
    </ligand>
</feature>
<feature type="binding site" evidence="2">
    <location>
        <position position="120"/>
    </location>
    <ligand>
        <name>Ca(2+)</name>
        <dbReference type="ChEBI" id="CHEBI:29108"/>
    </ligand>
</feature>
<feature type="binding site" evidence="2">
    <location>
        <position position="126"/>
    </location>
    <ligand>
        <name>Ca(2+)</name>
        <dbReference type="ChEBI" id="CHEBI:29108"/>
    </ligand>
</feature>
<feature type="binding site" evidence="2">
    <location>
        <position position="143"/>
    </location>
    <ligand>
        <name>Ca(2+)</name>
        <dbReference type="ChEBI" id="CHEBI:29108"/>
    </ligand>
</feature>
<feature type="binding site" evidence="2">
    <location>
        <position position="144"/>
    </location>
    <ligand>
        <name>Ca(2+)</name>
        <dbReference type="ChEBI" id="CHEBI:29108"/>
    </ligand>
</feature>
<feature type="glycosylation site" description="N-linked (GlcNAc...) asparagine" evidence="3">
    <location>
        <position position="60"/>
    </location>
</feature>
<feature type="glycosylation site" description="N-linked (GlcNAc...) asparagine" evidence="3">
    <location>
        <position position="104"/>
    </location>
</feature>
<feature type="glycosylation site" description="N-linked (GlcNAc...) asparagine" evidence="3">
    <location>
        <position position="177"/>
    </location>
</feature>
<feature type="glycosylation site" description="N-linked (GlcNAc...) asparagine" evidence="3">
    <location>
        <position position="216"/>
    </location>
</feature>
<feature type="glycosylation site" description="N-linked (GlcNAc...) asparagine" evidence="3">
    <location>
        <position position="232"/>
    </location>
</feature>
<feature type="glycosylation site" description="N-linked (GlcNAc...) asparagine" evidence="3">
    <location>
        <position position="246"/>
    </location>
</feature>
<feature type="glycosylation site" description="N-linked (GlcNAc...) asparagine" evidence="3">
    <location>
        <position position="271"/>
    </location>
</feature>
<feature type="disulfide bond" evidence="2">
    <location>
        <begin position="57"/>
        <end position="155"/>
    </location>
</feature>
<feature type="disulfide bond" evidence="2">
    <location>
        <begin position="128"/>
        <end position="160"/>
    </location>
</feature>
<feature type="disulfide bond" evidence="2">
    <location>
        <begin position="128"/>
        <end position="147"/>
    </location>
</feature>
<feature type="disulfide bond" evidence="2">
    <location>
        <begin position="160"/>
        <end position="171"/>
    </location>
</feature>
<feature type="disulfide bond" evidence="1">
    <location>
        <begin position="165"/>
        <end position="180"/>
    </location>
</feature>
<feature type="disulfide bond" evidence="2">
    <location>
        <begin position="182"/>
        <end position="191"/>
    </location>
</feature>
<feature type="disulfide bond" evidence="1">
    <location>
        <begin position="197"/>
        <end position="241"/>
    </location>
</feature>
<feature type="disulfide bond" evidence="1">
    <location>
        <begin position="227"/>
        <end position="254"/>
    </location>
</feature>
<feature type="disulfide bond" evidence="1">
    <location>
        <begin position="259"/>
        <end position="303"/>
    </location>
</feature>
<feature type="disulfide bond" evidence="1">
    <location>
        <begin position="289"/>
        <end position="316"/>
    </location>
</feature>
<comment type="function">
    <text evidence="2">Calcium-dependent lectin that mediates cell adhesion by binding to glycoproteins on neighboring cells. Mediates the adherence of lymphocytes to endothelial cells of high endothelial venules in peripheral lymph nodes. Promotes initial tethering and rolling of leukocytes in endothelia.</text>
</comment>
<comment type="subunit">
    <text evidence="2">Interaction with SELPLG/PSGL1 and PODXL2 is required for promoting recruitment and rolling of leukocytes. This interaction is dependent on the sialyl Lewis X glycan modification of SELPLG and PODXL2, and tyrosine sulfation modifications of SELPLG. Sulfation on 'Tyr-51' of SELPLG is important for L-selectin binding.</text>
</comment>
<comment type="subcellular location">
    <subcellularLocation>
        <location evidence="2">Cell membrane</location>
        <topology evidence="2">Single-pass type I membrane protein</topology>
    </subcellularLocation>
</comment>
<comment type="PTM">
    <text evidence="2">N-glycosylated.</text>
</comment>
<comment type="similarity">
    <text evidence="7">Belongs to the selectin/LECAM family.</text>
</comment>
<dbReference type="EMBL" id="U73728">
    <property type="protein sequence ID" value="AAB18248.1"/>
    <property type="molecule type" value="mRNA"/>
</dbReference>
<dbReference type="RefSeq" id="NP_001009074.1">
    <property type="nucleotide sequence ID" value="NM_001009074.1"/>
</dbReference>
<dbReference type="SMR" id="Q95237"/>
<dbReference type="FunCoup" id="Q95237">
    <property type="interactions" value="272"/>
</dbReference>
<dbReference type="STRING" id="9598.ENSPTRP00000002764"/>
<dbReference type="GlyCosmos" id="Q95237">
    <property type="glycosylation" value="7 sites, No reported glycans"/>
</dbReference>
<dbReference type="PaxDb" id="9598-ENSPTRP00000002764"/>
<dbReference type="GeneID" id="450191"/>
<dbReference type="KEGG" id="ptr:450191"/>
<dbReference type="CTD" id="6402"/>
<dbReference type="eggNOG" id="KOG4297">
    <property type="taxonomic scope" value="Eukaryota"/>
</dbReference>
<dbReference type="HOGENOM" id="CLU_065067_0_0_1"/>
<dbReference type="InParanoid" id="Q95237"/>
<dbReference type="OrthoDB" id="1882at9604"/>
<dbReference type="TreeFam" id="TF326910"/>
<dbReference type="Proteomes" id="UP000002277">
    <property type="component" value="Unplaced"/>
</dbReference>
<dbReference type="GO" id="GO:0009897">
    <property type="term" value="C:external side of plasma membrane"/>
    <property type="evidence" value="ECO:0000318"/>
    <property type="project" value="GO_Central"/>
</dbReference>
<dbReference type="GO" id="GO:0005615">
    <property type="term" value="C:extracellular space"/>
    <property type="evidence" value="ECO:0000318"/>
    <property type="project" value="GO_Central"/>
</dbReference>
<dbReference type="GO" id="GO:0005886">
    <property type="term" value="C:plasma membrane"/>
    <property type="evidence" value="ECO:0000250"/>
    <property type="project" value="UniProtKB"/>
</dbReference>
<dbReference type="GO" id="GO:0005509">
    <property type="term" value="F:calcium ion binding"/>
    <property type="evidence" value="ECO:0000250"/>
    <property type="project" value="UniProtKB"/>
</dbReference>
<dbReference type="GO" id="GO:0070492">
    <property type="term" value="F:oligosaccharide binding"/>
    <property type="evidence" value="ECO:0000250"/>
    <property type="project" value="UniProtKB"/>
</dbReference>
<dbReference type="GO" id="GO:0033691">
    <property type="term" value="F:sialic acid binding"/>
    <property type="evidence" value="ECO:0000318"/>
    <property type="project" value="GO_Central"/>
</dbReference>
<dbReference type="GO" id="GO:0016339">
    <property type="term" value="P:calcium-dependent cell-cell adhesion via plasma membrane cell adhesion molecules"/>
    <property type="evidence" value="ECO:0000250"/>
    <property type="project" value="UniProtKB"/>
</dbReference>
<dbReference type="GO" id="GO:0007157">
    <property type="term" value="P:heterophilic cell-cell adhesion via plasma membrane cell adhesion molecules"/>
    <property type="evidence" value="ECO:0000318"/>
    <property type="project" value="GO_Central"/>
</dbReference>
<dbReference type="GO" id="GO:0050901">
    <property type="term" value="P:leukocyte tethering or rolling"/>
    <property type="evidence" value="ECO:0000250"/>
    <property type="project" value="UniProtKB"/>
</dbReference>
<dbReference type="GO" id="GO:0034097">
    <property type="term" value="P:response to cytokine"/>
    <property type="evidence" value="ECO:0000318"/>
    <property type="project" value="GO_Central"/>
</dbReference>
<dbReference type="CDD" id="cd00033">
    <property type="entry name" value="CCP"/>
    <property type="match status" value="2"/>
</dbReference>
<dbReference type="CDD" id="cd03592">
    <property type="entry name" value="CLECT_selectins_like"/>
    <property type="match status" value="1"/>
</dbReference>
<dbReference type="CDD" id="cd00054">
    <property type="entry name" value="EGF_CA"/>
    <property type="match status" value="1"/>
</dbReference>
<dbReference type="FunFam" id="3.10.100.10:FF:000007">
    <property type="entry name" value="L-selectin"/>
    <property type="match status" value="1"/>
</dbReference>
<dbReference type="FunFam" id="2.10.25.10:FF:000176">
    <property type="entry name" value="Selectin P"/>
    <property type="match status" value="1"/>
</dbReference>
<dbReference type="FunFam" id="2.10.70.10:FF:000001">
    <property type="entry name" value="Selectin P"/>
    <property type="match status" value="2"/>
</dbReference>
<dbReference type="Gene3D" id="2.10.70.10">
    <property type="entry name" value="Complement Module, domain 1"/>
    <property type="match status" value="2"/>
</dbReference>
<dbReference type="Gene3D" id="2.10.25.10">
    <property type="entry name" value="Laminin"/>
    <property type="match status" value="1"/>
</dbReference>
<dbReference type="Gene3D" id="3.10.100.10">
    <property type="entry name" value="Mannose-Binding Protein A, subunit A"/>
    <property type="match status" value="1"/>
</dbReference>
<dbReference type="InterPro" id="IPR001304">
    <property type="entry name" value="C-type_lectin-like"/>
</dbReference>
<dbReference type="InterPro" id="IPR016186">
    <property type="entry name" value="C-type_lectin-like/link_sf"/>
</dbReference>
<dbReference type="InterPro" id="IPR018378">
    <property type="entry name" value="C-type_lectin_CS"/>
</dbReference>
<dbReference type="InterPro" id="IPR050350">
    <property type="entry name" value="Compl-Cell_Adhes-Reg"/>
</dbReference>
<dbReference type="InterPro" id="IPR016187">
    <property type="entry name" value="CTDL_fold"/>
</dbReference>
<dbReference type="InterPro" id="IPR000742">
    <property type="entry name" value="EGF-like_dom"/>
</dbReference>
<dbReference type="InterPro" id="IPR016348">
    <property type="entry name" value="L-selectin"/>
</dbReference>
<dbReference type="InterPro" id="IPR033991">
    <property type="entry name" value="Selectin_CTLD"/>
</dbReference>
<dbReference type="InterPro" id="IPR002396">
    <property type="entry name" value="Selectin_superfamily"/>
</dbReference>
<dbReference type="InterPro" id="IPR035976">
    <property type="entry name" value="Sushi/SCR/CCP_sf"/>
</dbReference>
<dbReference type="InterPro" id="IPR000436">
    <property type="entry name" value="Sushi_SCR_CCP_dom"/>
</dbReference>
<dbReference type="PANTHER" id="PTHR19325">
    <property type="entry name" value="COMPLEMENT COMPONENT-RELATED SUSHI DOMAIN-CONTAINING"/>
    <property type="match status" value="1"/>
</dbReference>
<dbReference type="PANTHER" id="PTHR19325:SF543">
    <property type="entry name" value="L-SELECTIN"/>
    <property type="match status" value="1"/>
</dbReference>
<dbReference type="Pfam" id="PF00008">
    <property type="entry name" value="EGF"/>
    <property type="match status" value="1"/>
</dbReference>
<dbReference type="Pfam" id="PF00059">
    <property type="entry name" value="Lectin_C"/>
    <property type="match status" value="1"/>
</dbReference>
<dbReference type="Pfam" id="PF00084">
    <property type="entry name" value="Sushi"/>
    <property type="match status" value="2"/>
</dbReference>
<dbReference type="PIRSF" id="PIRSF002421">
    <property type="entry name" value="L-selectin"/>
    <property type="match status" value="1"/>
</dbReference>
<dbReference type="PRINTS" id="PR00343">
    <property type="entry name" value="SELECTIN"/>
</dbReference>
<dbReference type="SMART" id="SM00032">
    <property type="entry name" value="CCP"/>
    <property type="match status" value="2"/>
</dbReference>
<dbReference type="SMART" id="SM00034">
    <property type="entry name" value="CLECT"/>
    <property type="match status" value="1"/>
</dbReference>
<dbReference type="SMART" id="SM00181">
    <property type="entry name" value="EGF"/>
    <property type="match status" value="1"/>
</dbReference>
<dbReference type="SUPFAM" id="SSF56436">
    <property type="entry name" value="C-type lectin-like"/>
    <property type="match status" value="1"/>
</dbReference>
<dbReference type="SUPFAM" id="SSF57535">
    <property type="entry name" value="Complement control module/SCR domain"/>
    <property type="match status" value="2"/>
</dbReference>
<dbReference type="SUPFAM" id="SSF57196">
    <property type="entry name" value="EGF/Laminin"/>
    <property type="match status" value="1"/>
</dbReference>
<dbReference type="PROSITE" id="PS00615">
    <property type="entry name" value="C_TYPE_LECTIN_1"/>
    <property type="match status" value="1"/>
</dbReference>
<dbReference type="PROSITE" id="PS50041">
    <property type="entry name" value="C_TYPE_LECTIN_2"/>
    <property type="match status" value="1"/>
</dbReference>
<dbReference type="PROSITE" id="PS00022">
    <property type="entry name" value="EGF_1"/>
    <property type="match status" value="1"/>
</dbReference>
<dbReference type="PROSITE" id="PS01186">
    <property type="entry name" value="EGF_2"/>
    <property type="match status" value="1"/>
</dbReference>
<dbReference type="PROSITE" id="PS50026">
    <property type="entry name" value="EGF_3"/>
    <property type="match status" value="1"/>
</dbReference>
<dbReference type="PROSITE" id="PS50923">
    <property type="entry name" value="SUSHI"/>
    <property type="match status" value="2"/>
</dbReference>
<organism>
    <name type="scientific">Pan troglodytes</name>
    <name type="common">Chimpanzee</name>
    <dbReference type="NCBI Taxonomy" id="9598"/>
    <lineage>
        <taxon>Eukaryota</taxon>
        <taxon>Metazoa</taxon>
        <taxon>Chordata</taxon>
        <taxon>Craniata</taxon>
        <taxon>Vertebrata</taxon>
        <taxon>Euteleostomi</taxon>
        <taxon>Mammalia</taxon>
        <taxon>Eutheria</taxon>
        <taxon>Euarchontoglires</taxon>
        <taxon>Primates</taxon>
        <taxon>Haplorrhini</taxon>
        <taxon>Catarrhini</taxon>
        <taxon>Hominidae</taxon>
        <taxon>Pan</taxon>
    </lineage>
</organism>
<name>LYAM1_PANTR</name>
<keyword id="KW-0106">Calcium</keyword>
<keyword id="KW-0130">Cell adhesion</keyword>
<keyword id="KW-1003">Cell membrane</keyword>
<keyword id="KW-1015">Disulfide bond</keyword>
<keyword id="KW-0245">EGF-like domain</keyword>
<keyword id="KW-0325">Glycoprotein</keyword>
<keyword id="KW-0430">Lectin</keyword>
<keyword id="KW-0472">Membrane</keyword>
<keyword id="KW-0479">Metal-binding</keyword>
<keyword id="KW-1185">Reference proteome</keyword>
<keyword id="KW-0677">Repeat</keyword>
<keyword id="KW-0732">Signal</keyword>
<keyword id="KW-0768">Sushi</keyword>
<keyword id="KW-0812">Transmembrane</keyword>
<keyword id="KW-1133">Transmembrane helix</keyword>
<gene>
    <name type="primary">SELL</name>
</gene>
<reference key="1">
    <citation type="submission" date="1996-11" db="EMBL/GenBank/DDBJ databases">
        <title>Cloning of the cDNA encoding L-selectin from nonhuman primates.</title>
        <authorList>
            <person name="Budman J.I."/>
            <person name="Fu H."/>
            <person name="Johnson C.E."/>
            <person name="Thakur A.B."/>
            <person name="Berg E.L."/>
            <person name="Tsurushita N."/>
        </authorList>
    </citation>
    <scope>NUCLEOTIDE SEQUENCE [MRNA]</scope>
</reference>